<dbReference type="EMBL" id="CP000086">
    <property type="protein sequence ID" value="ABC37356.1"/>
    <property type="molecule type" value="Genomic_DNA"/>
</dbReference>
<dbReference type="RefSeq" id="WP_004202755.1">
    <property type="nucleotide sequence ID" value="NZ_CP008786.1"/>
</dbReference>
<dbReference type="SMR" id="Q2SU45"/>
<dbReference type="GeneID" id="93061814"/>
<dbReference type="KEGG" id="bte:BTH_I3050"/>
<dbReference type="HOGENOM" id="CLU_131047_1_4_4"/>
<dbReference type="Proteomes" id="UP000001930">
    <property type="component" value="Chromosome I"/>
</dbReference>
<dbReference type="GO" id="GO:0022625">
    <property type="term" value="C:cytosolic large ribosomal subunit"/>
    <property type="evidence" value="ECO:0007669"/>
    <property type="project" value="TreeGrafter"/>
</dbReference>
<dbReference type="GO" id="GO:0003735">
    <property type="term" value="F:structural constituent of ribosome"/>
    <property type="evidence" value="ECO:0007669"/>
    <property type="project" value="InterPro"/>
</dbReference>
<dbReference type="GO" id="GO:0006412">
    <property type="term" value="P:translation"/>
    <property type="evidence" value="ECO:0007669"/>
    <property type="project" value="UniProtKB-UniRule"/>
</dbReference>
<dbReference type="CDD" id="cd01658">
    <property type="entry name" value="Ribosomal_L30"/>
    <property type="match status" value="1"/>
</dbReference>
<dbReference type="FunFam" id="3.30.1390.20:FF:000001">
    <property type="entry name" value="50S ribosomal protein L30"/>
    <property type="match status" value="1"/>
</dbReference>
<dbReference type="Gene3D" id="3.30.1390.20">
    <property type="entry name" value="Ribosomal protein L30, ferredoxin-like fold domain"/>
    <property type="match status" value="1"/>
</dbReference>
<dbReference type="HAMAP" id="MF_01371_B">
    <property type="entry name" value="Ribosomal_uL30_B"/>
    <property type="match status" value="1"/>
</dbReference>
<dbReference type="InterPro" id="IPR036919">
    <property type="entry name" value="Ribo_uL30_ferredoxin-like_sf"/>
</dbReference>
<dbReference type="InterPro" id="IPR005996">
    <property type="entry name" value="Ribosomal_uL30_bac-type"/>
</dbReference>
<dbReference type="InterPro" id="IPR016082">
    <property type="entry name" value="Ribosomal_uL30_ferredoxin-like"/>
</dbReference>
<dbReference type="NCBIfam" id="TIGR01308">
    <property type="entry name" value="rpmD_bact"/>
    <property type="match status" value="1"/>
</dbReference>
<dbReference type="PANTHER" id="PTHR15892:SF2">
    <property type="entry name" value="LARGE RIBOSOMAL SUBUNIT PROTEIN UL30M"/>
    <property type="match status" value="1"/>
</dbReference>
<dbReference type="PANTHER" id="PTHR15892">
    <property type="entry name" value="MITOCHONDRIAL RIBOSOMAL PROTEIN L30"/>
    <property type="match status" value="1"/>
</dbReference>
<dbReference type="Pfam" id="PF00327">
    <property type="entry name" value="Ribosomal_L30"/>
    <property type="match status" value="1"/>
</dbReference>
<dbReference type="PIRSF" id="PIRSF002211">
    <property type="entry name" value="Ribosomal_L30_bac-type"/>
    <property type="match status" value="1"/>
</dbReference>
<dbReference type="SUPFAM" id="SSF55129">
    <property type="entry name" value="Ribosomal protein L30p/L7e"/>
    <property type="match status" value="1"/>
</dbReference>
<name>RL30_BURTA</name>
<comment type="subunit">
    <text evidence="1">Part of the 50S ribosomal subunit.</text>
</comment>
<comment type="similarity">
    <text evidence="1">Belongs to the universal ribosomal protein uL30 family.</text>
</comment>
<sequence>MSEKTVKVQLVKSLIGTRESHRATVRGLGLRRLNSVSELQDTPAVRGMINKVSYLVKVIG</sequence>
<protein>
    <recommendedName>
        <fullName evidence="1">Large ribosomal subunit protein uL30</fullName>
    </recommendedName>
    <alternativeName>
        <fullName evidence="2">50S ribosomal protein L30</fullName>
    </alternativeName>
</protein>
<reference key="1">
    <citation type="journal article" date="2005" name="BMC Genomics">
        <title>Bacterial genome adaptation to niches: divergence of the potential virulence genes in three Burkholderia species of different survival strategies.</title>
        <authorList>
            <person name="Kim H.S."/>
            <person name="Schell M.A."/>
            <person name="Yu Y."/>
            <person name="Ulrich R.L."/>
            <person name="Sarria S.H."/>
            <person name="Nierman W.C."/>
            <person name="DeShazer D."/>
        </authorList>
    </citation>
    <scope>NUCLEOTIDE SEQUENCE [LARGE SCALE GENOMIC DNA]</scope>
    <source>
        <strain>ATCC 700388 / DSM 13276 / CCUG 48851 / CIP 106301 / E264</strain>
    </source>
</reference>
<feature type="chain" id="PRO_0000273762" description="Large ribosomal subunit protein uL30">
    <location>
        <begin position="1"/>
        <end position="60"/>
    </location>
</feature>
<proteinExistence type="inferred from homology"/>
<keyword id="KW-0687">Ribonucleoprotein</keyword>
<keyword id="KW-0689">Ribosomal protein</keyword>
<organism>
    <name type="scientific">Burkholderia thailandensis (strain ATCC 700388 / DSM 13276 / CCUG 48851 / CIP 106301 / E264)</name>
    <dbReference type="NCBI Taxonomy" id="271848"/>
    <lineage>
        <taxon>Bacteria</taxon>
        <taxon>Pseudomonadati</taxon>
        <taxon>Pseudomonadota</taxon>
        <taxon>Betaproteobacteria</taxon>
        <taxon>Burkholderiales</taxon>
        <taxon>Burkholderiaceae</taxon>
        <taxon>Burkholderia</taxon>
        <taxon>pseudomallei group</taxon>
    </lineage>
</organism>
<gene>
    <name evidence="1" type="primary">rpmD</name>
    <name type="ordered locus">BTH_I3050</name>
</gene>
<evidence type="ECO:0000255" key="1">
    <source>
        <dbReference type="HAMAP-Rule" id="MF_01371"/>
    </source>
</evidence>
<evidence type="ECO:0000305" key="2"/>
<accession>Q2SU45</accession>